<organism>
    <name type="scientific">Halobacterium salinarum (strain ATCC 700922 / JCM 11081 / NRC-1)</name>
    <name type="common">Halobacterium halobium</name>
    <dbReference type="NCBI Taxonomy" id="64091"/>
    <lineage>
        <taxon>Archaea</taxon>
        <taxon>Methanobacteriati</taxon>
        <taxon>Methanobacteriota</taxon>
        <taxon>Stenosarchaea group</taxon>
        <taxon>Halobacteria</taxon>
        <taxon>Halobacteriales</taxon>
        <taxon>Halobacteriaceae</taxon>
        <taxon>Halobacterium</taxon>
        <taxon>Halobacterium salinarum NRC-34001</taxon>
    </lineage>
</organism>
<reference key="1">
    <citation type="journal article" date="1988" name="J. Biol. Chem.">
        <title>Halobacterial flagellins are encoded by a multigene family. Characterization of five flagellin genes.</title>
        <authorList>
            <person name="Gerl L."/>
            <person name="Sumper M."/>
        </authorList>
    </citation>
    <scope>NUCLEOTIDE SEQUENCE [GENOMIC DNA]</scope>
</reference>
<reference key="2">
    <citation type="journal article" date="2000" name="Proc. Natl. Acad. Sci. U.S.A.">
        <title>Genome sequence of Halobacterium species NRC-1.</title>
        <authorList>
            <person name="Ng W.V."/>
            <person name="Kennedy S.P."/>
            <person name="Mahairas G.G."/>
            <person name="Berquist B."/>
            <person name="Pan M."/>
            <person name="Shukla H.D."/>
            <person name="Lasky S.R."/>
            <person name="Baliga N.S."/>
            <person name="Thorsson V."/>
            <person name="Sbrogna J."/>
            <person name="Swartzell S."/>
            <person name="Weir D."/>
            <person name="Hall J."/>
            <person name="Dahl T.A."/>
            <person name="Welti R."/>
            <person name="Goo Y.A."/>
            <person name="Leithauser B."/>
            <person name="Keller K."/>
            <person name="Cruz R."/>
            <person name="Danson M.J."/>
            <person name="Hough D.W."/>
            <person name="Maddocks D.G."/>
            <person name="Jablonski P.E."/>
            <person name="Krebs M.P."/>
            <person name="Angevine C.M."/>
            <person name="Dale H."/>
            <person name="Isenbarger T.A."/>
            <person name="Peck R.F."/>
            <person name="Pohlschroder M."/>
            <person name="Spudich J.L."/>
            <person name="Jung K.-H."/>
            <person name="Alam M."/>
            <person name="Freitas T."/>
            <person name="Hou S."/>
            <person name="Daniels C.J."/>
            <person name="Dennis P.P."/>
            <person name="Omer A.D."/>
            <person name="Ebhardt H."/>
            <person name="Lowe T.M."/>
            <person name="Liang P."/>
            <person name="Riley M."/>
            <person name="Hood L."/>
            <person name="DasSarma S."/>
        </authorList>
    </citation>
    <scope>NUCLEOTIDE SEQUENCE [LARGE SCALE GENOMIC DNA]</scope>
    <source>
        <strain>ATCC 700922 / JCM 11081 / NRC-1</strain>
    </source>
</reference>
<name>FLAB1_HALSA</name>
<sequence>MFEFITDEDERGQVGIGTLIVFIAMVLVAAIAAGVLINTAGYLQSKGSATGEEASAQVSNRINIVSAYGNVNNEKVDYVNLTVRQAAGADNINLTKSTIQWIGPDRATTLTYSSNSPSSLGENFTTESIKGSSADVLVDQSDRIKVIMYASGVSSNLGAGDEVQLTVTTQYGSKTTYWAQVPESLKDKNAVTL</sequence>
<comment type="function">
    <text>Flagellin is the subunit protein which polymerizes to form the filaments of archaeal flagella.</text>
</comment>
<comment type="subcellular location">
    <subcellularLocation>
        <location>Archaeal flagellum</location>
    </subcellularLocation>
</comment>
<comment type="PTM">
    <text>Glycosylated.</text>
</comment>
<comment type="similarity">
    <text evidence="2">Belongs to the archaeal flagellin family.</text>
</comment>
<proteinExistence type="evidence at protein level"/>
<dbReference type="EMBL" id="M19884">
    <property type="protein sequence ID" value="AAA72643.1"/>
    <property type="molecule type" value="Genomic_DNA"/>
</dbReference>
<dbReference type="EMBL" id="AE004437">
    <property type="protein sequence ID" value="AAG19383.1"/>
    <property type="molecule type" value="Genomic_DNA"/>
</dbReference>
<dbReference type="PIR" id="C28944">
    <property type="entry name" value="C28944"/>
</dbReference>
<dbReference type="PIR" id="C84252">
    <property type="entry name" value="C84252"/>
</dbReference>
<dbReference type="RefSeq" id="WP_010902680.1">
    <property type="nucleotide sequence ID" value="NC_002607.1"/>
</dbReference>
<dbReference type="PDB" id="9EQ7">
    <property type="method" value="EM"/>
    <property type="resolution" value="3.23 A"/>
    <property type="chains" value="A/B/C/D/E/F/G/H/I/J/K/L/M/N/O/P/Q/R/S/T/U/V/W/X/Y/Z=1-193"/>
</dbReference>
<dbReference type="PDB" id="9ESM">
    <property type="method" value="EM"/>
    <property type="resolution" value="3.06 A"/>
    <property type="chains" value="A/B/C/D/E/F/G/H/I/J/K/L/M/N/O/P/Q/R/S/T/U/V/W/X/Y=1-193"/>
</dbReference>
<dbReference type="PDB" id="9ETU">
    <property type="method" value="EM"/>
    <property type="resolution" value="3.33 A"/>
    <property type="chains" value="A/B/C/D/E/F/G/H/I/J/K/L/M/N/O/P/Q/R/S/T/U/V/W/X/Y=1-193"/>
</dbReference>
<dbReference type="PDBsum" id="9EQ7"/>
<dbReference type="PDBsum" id="9ESM"/>
<dbReference type="PDBsum" id="9ETU"/>
<dbReference type="SMR" id="P61116"/>
<dbReference type="FunCoup" id="P61116">
    <property type="interactions" value="2"/>
</dbReference>
<dbReference type="STRING" id="64091.VNG_0960G"/>
<dbReference type="PaxDb" id="64091-VNG_0960G"/>
<dbReference type="KEGG" id="hal:VNG_0960G"/>
<dbReference type="PATRIC" id="fig|64091.14.peg.738"/>
<dbReference type="HOGENOM" id="CLU_051124_1_0_2"/>
<dbReference type="InParanoid" id="P61116"/>
<dbReference type="OrthoDB" id="102632at2157"/>
<dbReference type="PhylomeDB" id="P61116"/>
<dbReference type="Proteomes" id="UP000000554">
    <property type="component" value="Chromosome"/>
</dbReference>
<dbReference type="GO" id="GO:0097589">
    <property type="term" value="C:archaeal-type flagellum"/>
    <property type="evidence" value="ECO:0007669"/>
    <property type="project" value="UniProtKB-SubCell"/>
</dbReference>
<dbReference type="GO" id="GO:0005198">
    <property type="term" value="F:structural molecule activity"/>
    <property type="evidence" value="ECO:0007669"/>
    <property type="project" value="InterPro"/>
</dbReference>
<dbReference type="GO" id="GO:0097588">
    <property type="term" value="P:archaeal or bacterial-type flagellum-dependent cell motility"/>
    <property type="evidence" value="ECO:0007669"/>
    <property type="project" value="InterPro"/>
</dbReference>
<dbReference type="InterPro" id="IPR013373">
    <property type="entry name" value="Flagellin/pilin_N_arc"/>
</dbReference>
<dbReference type="InterPro" id="IPR002774">
    <property type="entry name" value="Flagellin_arc"/>
</dbReference>
<dbReference type="NCBIfam" id="TIGR02537">
    <property type="entry name" value="arch_flag_Nterm"/>
    <property type="match status" value="1"/>
</dbReference>
<dbReference type="PANTHER" id="PTHR35903">
    <property type="entry name" value="FLAGELLIN B1"/>
    <property type="match status" value="1"/>
</dbReference>
<dbReference type="PANTHER" id="PTHR35903:SF1">
    <property type="entry name" value="FLAGELLIN B1"/>
    <property type="match status" value="1"/>
</dbReference>
<dbReference type="Pfam" id="PF01917">
    <property type="entry name" value="Arch_flagellin"/>
    <property type="match status" value="1"/>
</dbReference>
<feature type="propeptide" id="PRO_0000009367" evidence="1">
    <location>
        <begin position="1"/>
        <end position="12"/>
    </location>
</feature>
<feature type="chain" id="PRO_0000009368" description="Flagellin B1">
    <location>
        <begin position="13"/>
        <end position="193"/>
    </location>
</feature>
<protein>
    <recommendedName>
        <fullName>Flagellin B1</fullName>
    </recommendedName>
</protein>
<evidence type="ECO:0000255" key="1"/>
<evidence type="ECO:0000305" key="2"/>
<gene>
    <name type="primary">flaB1</name>
    <name type="ordered locus">VNG_0960G</name>
</gene>
<keyword id="KW-0002">3D-structure</keyword>
<keyword id="KW-0974">Archaeal flagellum</keyword>
<keyword id="KW-0325">Glycoprotein</keyword>
<keyword id="KW-1185">Reference proteome</keyword>
<accession>P61116</accession>
<accession>P13076</accession>
<accession>P61117</accession>
<accession>Q9HQX6</accession>